<feature type="chain" id="PRO_0000065515" description="Uncharacterized protein ZK370.6">
    <location>
        <begin position="1"/>
        <end position="164"/>
    </location>
</feature>
<dbReference type="EMBL" id="FO080164">
    <property type="protein sequence ID" value="CCD61719.1"/>
    <property type="status" value="ALT_SEQ"/>
    <property type="molecule type" value="Genomic_DNA"/>
</dbReference>
<dbReference type="PIR" id="S44667">
    <property type="entry name" value="S44667"/>
</dbReference>
<dbReference type="RefSeq" id="NP_001254963.1">
    <property type="nucleotide sequence ID" value="NM_001268034.1"/>
</dbReference>
<dbReference type="FunCoup" id="Q02333">
    <property type="interactions" value="120"/>
</dbReference>
<dbReference type="EnsemblMetazoa" id="ZK370.6b.1">
    <property type="protein sequence ID" value="ZK370.6b.1"/>
    <property type="gene ID" value="WBGene00022720"/>
</dbReference>
<dbReference type="GeneID" id="191302"/>
<dbReference type="KEGG" id="cel:CELE_ZK370.6"/>
<dbReference type="UCSC" id="ZK370.6">
    <property type="organism name" value="c. elegans"/>
</dbReference>
<dbReference type="AGR" id="WB:WBGene00022720"/>
<dbReference type="CTD" id="191302"/>
<dbReference type="WormBase" id="ZK370.6b">
    <property type="protein sequence ID" value="CE45884"/>
    <property type="gene ID" value="WBGene00022720"/>
</dbReference>
<dbReference type="GeneTree" id="ENSGT00970000196539"/>
<dbReference type="InParanoid" id="Q02333"/>
<dbReference type="OrthoDB" id="5819415at2759"/>
<dbReference type="PRO" id="PR:Q02333"/>
<dbReference type="Proteomes" id="UP000001940">
    <property type="component" value="Chromosome III"/>
</dbReference>
<dbReference type="Bgee" id="WBGene00022720">
    <property type="expression patterns" value="Expressed in pharyngeal muscle cell (C elegans) and 3 other cell types or tissues"/>
</dbReference>
<dbReference type="ExpressionAtlas" id="Q02333">
    <property type="expression patterns" value="baseline and differential"/>
</dbReference>
<dbReference type="PANTHER" id="PTHR37431">
    <property type="entry name" value="PROTEIN CBG06927"/>
    <property type="match status" value="1"/>
</dbReference>
<dbReference type="PANTHER" id="PTHR37431:SF6">
    <property type="entry name" value="PROTEIN CBG06927"/>
    <property type="match status" value="1"/>
</dbReference>
<reference key="1">
    <citation type="journal article" date="1994" name="Nature">
        <title>2.2 Mb of contiguous nucleotide sequence from chromosome III of C. elegans.</title>
        <authorList>
            <person name="Wilson R."/>
            <person name="Ainscough R."/>
            <person name="Anderson K."/>
            <person name="Baynes C."/>
            <person name="Berks M."/>
            <person name="Bonfield J."/>
            <person name="Burton J."/>
            <person name="Connell M."/>
            <person name="Copsey T."/>
            <person name="Cooper J."/>
            <person name="Coulson A."/>
            <person name="Craxton M."/>
            <person name="Dear S."/>
            <person name="Du Z."/>
            <person name="Durbin R."/>
            <person name="Favello A."/>
            <person name="Fraser A."/>
            <person name="Fulton L."/>
            <person name="Gardner A."/>
            <person name="Green P."/>
            <person name="Hawkins T."/>
            <person name="Hillier L."/>
            <person name="Jier M."/>
            <person name="Johnston L."/>
            <person name="Jones M."/>
            <person name="Kershaw J."/>
            <person name="Kirsten J."/>
            <person name="Laisster N."/>
            <person name="Latreille P."/>
            <person name="Lightning J."/>
            <person name="Lloyd C."/>
            <person name="Mortimore B."/>
            <person name="O'Callaghan M."/>
            <person name="Parsons J."/>
            <person name="Percy C."/>
            <person name="Rifken L."/>
            <person name="Roopra A."/>
            <person name="Saunders D."/>
            <person name="Shownkeen R."/>
            <person name="Sims M."/>
            <person name="Smaldon N."/>
            <person name="Smith A."/>
            <person name="Smith M."/>
            <person name="Sonnhammer E."/>
            <person name="Staden R."/>
            <person name="Sulston J."/>
            <person name="Thierry-Mieg J."/>
            <person name="Thomas K."/>
            <person name="Vaudin M."/>
            <person name="Vaughan K."/>
            <person name="Waterston R."/>
            <person name="Watson A."/>
            <person name="Weinstock L."/>
            <person name="Wilkinson-Sproat J."/>
            <person name="Wohldman P."/>
        </authorList>
    </citation>
    <scope>NUCLEOTIDE SEQUENCE [LARGE SCALE GENOMIC DNA]</scope>
    <source>
        <strain>Bristol N2</strain>
    </source>
</reference>
<reference key="2">
    <citation type="journal article" date="1998" name="Science">
        <title>Genome sequence of the nematode C. elegans: a platform for investigating biology.</title>
        <authorList>
            <consortium name="The C. elegans sequencing consortium"/>
        </authorList>
    </citation>
    <scope>NUCLEOTIDE SEQUENCE [LARGE SCALE GENOMIC DNA]</scope>
    <source>
        <strain>Bristol N2</strain>
    </source>
</reference>
<protein>
    <recommendedName>
        <fullName>Uncharacterized protein ZK370.6</fullName>
    </recommendedName>
</protein>
<proteinExistence type="predicted"/>
<evidence type="ECO:0000305" key="1"/>
<organism>
    <name type="scientific">Caenorhabditis elegans</name>
    <dbReference type="NCBI Taxonomy" id="6239"/>
    <lineage>
        <taxon>Eukaryota</taxon>
        <taxon>Metazoa</taxon>
        <taxon>Ecdysozoa</taxon>
        <taxon>Nematoda</taxon>
        <taxon>Chromadorea</taxon>
        <taxon>Rhabditida</taxon>
        <taxon>Rhabditina</taxon>
        <taxon>Rhabditomorpha</taxon>
        <taxon>Rhabditoidea</taxon>
        <taxon>Rhabditidae</taxon>
        <taxon>Peloderinae</taxon>
        <taxon>Caenorhabditis</taxon>
    </lineage>
</organism>
<gene>
    <name type="ORF">ZK370.6</name>
</gene>
<name>YOL6_CAEEL</name>
<comment type="sequence caution" evidence="1">
    <conflict type="erroneous gene model prediction">
        <sequence resource="EMBL-CDS" id="CCD61719"/>
    </conflict>
</comment>
<accession>Q02333</accession>
<sequence>MILLAFLMFIPGVETKESPVKCEYSDEKKVSECLQVFLYFKTRQCLTMKKLQPMLDYATKLQAETGAMQFPLQGGQVFNQLCSIYTDFKVEAQKEYISCKIAATQAISEAQGAKGSSTEAYLTEMCRAMDGYLRCSHPIILAKCGSDAWTLVSTVCLSRAKLFF</sequence>
<keyword id="KW-1185">Reference proteome</keyword>